<feature type="chain" id="PRO_1000058517" description="Recombination-associated protein RdgC">
    <location>
        <begin position="1"/>
        <end position="303"/>
    </location>
</feature>
<comment type="function">
    <text evidence="1">May be involved in recombination.</text>
</comment>
<comment type="subcellular location">
    <subcellularLocation>
        <location evidence="1">Cytoplasm</location>
        <location evidence="1">Nucleoid</location>
    </subcellularLocation>
</comment>
<comment type="similarity">
    <text evidence="1">Belongs to the RdgC family.</text>
</comment>
<sequence length="303" mass="34204">MLWFKNLMVYRLSREVSLSADEMEKQLSAFSFTPCGSQDMAKTGWVSPMGSHSDALTHTVNGQIVICARKEEKILPSPVIKQELQDKIERLEGEQHRKLKKTEKDSLKDEVLHSLLPRAFSRFNQTFLWIDTVNDLIMVDAASAKRAEDTLALLRKSLGSLPVVPLTLENPIELTLTEWVRSKTLPAGFALMDEAELKAILEDGGVIRCKKQDLFSDEIAVHIEAGKLVTKLALDWQERIQLVLSDDGSLKRLKFADTLRDQNEDIDREDFAQRFDADFILMTSELAALIKNLIEALGGEAQH</sequence>
<protein>
    <recommendedName>
        <fullName evidence="1">Recombination-associated protein RdgC</fullName>
    </recommendedName>
</protein>
<accession>A7FLH3</accession>
<name>RDGC_YERP3</name>
<reference key="1">
    <citation type="journal article" date="2007" name="PLoS Genet.">
        <title>The complete genome sequence of Yersinia pseudotuberculosis IP31758, the causative agent of Far East scarlet-like fever.</title>
        <authorList>
            <person name="Eppinger M."/>
            <person name="Rosovitz M.J."/>
            <person name="Fricke W.F."/>
            <person name="Rasko D.A."/>
            <person name="Kokorina G."/>
            <person name="Fayolle C."/>
            <person name="Lindler L.E."/>
            <person name="Carniel E."/>
            <person name="Ravel J."/>
        </authorList>
    </citation>
    <scope>NUCLEOTIDE SEQUENCE [LARGE SCALE GENOMIC DNA]</scope>
    <source>
        <strain>IP 31758</strain>
    </source>
</reference>
<gene>
    <name evidence="1" type="primary">rdgC</name>
    <name type="ordered locus">YpsIP31758_3141</name>
</gene>
<keyword id="KW-0963">Cytoplasm</keyword>
<keyword id="KW-0233">DNA recombination</keyword>
<dbReference type="EMBL" id="CP000720">
    <property type="protein sequence ID" value="ABS47489.1"/>
    <property type="molecule type" value="Genomic_DNA"/>
</dbReference>
<dbReference type="RefSeq" id="WP_002208691.1">
    <property type="nucleotide sequence ID" value="NC_009708.1"/>
</dbReference>
<dbReference type="SMR" id="A7FLH3"/>
<dbReference type="GeneID" id="57975504"/>
<dbReference type="KEGG" id="ypi:YpsIP31758_3141"/>
<dbReference type="HOGENOM" id="CLU_052038_1_1_6"/>
<dbReference type="Proteomes" id="UP000002412">
    <property type="component" value="Chromosome"/>
</dbReference>
<dbReference type="GO" id="GO:0043590">
    <property type="term" value="C:bacterial nucleoid"/>
    <property type="evidence" value="ECO:0007669"/>
    <property type="project" value="TreeGrafter"/>
</dbReference>
<dbReference type="GO" id="GO:0005737">
    <property type="term" value="C:cytoplasm"/>
    <property type="evidence" value="ECO:0007669"/>
    <property type="project" value="UniProtKB-UniRule"/>
</dbReference>
<dbReference type="GO" id="GO:0003690">
    <property type="term" value="F:double-stranded DNA binding"/>
    <property type="evidence" value="ECO:0007669"/>
    <property type="project" value="TreeGrafter"/>
</dbReference>
<dbReference type="GO" id="GO:0006310">
    <property type="term" value="P:DNA recombination"/>
    <property type="evidence" value="ECO:0007669"/>
    <property type="project" value="UniProtKB-UniRule"/>
</dbReference>
<dbReference type="GO" id="GO:0000018">
    <property type="term" value="P:regulation of DNA recombination"/>
    <property type="evidence" value="ECO:0007669"/>
    <property type="project" value="TreeGrafter"/>
</dbReference>
<dbReference type="HAMAP" id="MF_00194">
    <property type="entry name" value="RdgC"/>
    <property type="match status" value="1"/>
</dbReference>
<dbReference type="InterPro" id="IPR007476">
    <property type="entry name" value="RdgC"/>
</dbReference>
<dbReference type="NCBIfam" id="NF001460">
    <property type="entry name" value="PRK00321.1-1"/>
    <property type="match status" value="1"/>
</dbReference>
<dbReference type="NCBIfam" id="NF001462">
    <property type="entry name" value="PRK00321.1-3"/>
    <property type="match status" value="1"/>
</dbReference>
<dbReference type="NCBIfam" id="NF001464">
    <property type="entry name" value="PRK00321.1-5"/>
    <property type="match status" value="1"/>
</dbReference>
<dbReference type="PANTHER" id="PTHR38103">
    <property type="entry name" value="RECOMBINATION-ASSOCIATED PROTEIN RDGC"/>
    <property type="match status" value="1"/>
</dbReference>
<dbReference type="PANTHER" id="PTHR38103:SF1">
    <property type="entry name" value="RECOMBINATION-ASSOCIATED PROTEIN RDGC"/>
    <property type="match status" value="1"/>
</dbReference>
<dbReference type="Pfam" id="PF04381">
    <property type="entry name" value="RdgC"/>
    <property type="match status" value="1"/>
</dbReference>
<organism>
    <name type="scientific">Yersinia pseudotuberculosis serotype O:1b (strain IP 31758)</name>
    <dbReference type="NCBI Taxonomy" id="349747"/>
    <lineage>
        <taxon>Bacteria</taxon>
        <taxon>Pseudomonadati</taxon>
        <taxon>Pseudomonadota</taxon>
        <taxon>Gammaproteobacteria</taxon>
        <taxon>Enterobacterales</taxon>
        <taxon>Yersiniaceae</taxon>
        <taxon>Yersinia</taxon>
    </lineage>
</organism>
<proteinExistence type="inferred from homology"/>
<evidence type="ECO:0000255" key="1">
    <source>
        <dbReference type="HAMAP-Rule" id="MF_00194"/>
    </source>
</evidence>